<gene>
    <name type="primary">aglB2</name>
    <name type="ordered locus">PH1271</name>
</gene>
<feature type="chain" id="PRO_0000445593" description="Dolichyl-phosphooligosaccharide-protein glycotransferase 2">
    <location>
        <begin position="1"/>
        <end position="758"/>
    </location>
</feature>
<feature type="topological domain" description="Cytoplasmic" evidence="6">
    <location>
        <begin position="1"/>
        <end position="6"/>
    </location>
</feature>
<feature type="transmembrane region" description="Helical" evidence="5">
    <location>
        <begin position="7"/>
        <end position="27"/>
    </location>
</feature>
<feature type="topological domain" description="Extracellular" evidence="6">
    <location>
        <begin position="28"/>
        <end position="92"/>
    </location>
</feature>
<feature type="transmembrane region" description="Helical" evidence="5">
    <location>
        <begin position="93"/>
        <end position="113"/>
    </location>
</feature>
<feature type="topological domain" description="Cytoplasmic" evidence="6">
    <location>
        <begin position="114"/>
        <end position="120"/>
    </location>
</feature>
<feature type="transmembrane region" description="Helical" evidence="5">
    <location>
        <begin position="121"/>
        <end position="141"/>
    </location>
</feature>
<feature type="topological domain" description="Extracellular" evidence="6">
    <location>
        <begin position="142"/>
        <end position="145"/>
    </location>
</feature>
<feature type="transmembrane region" description="Helical" evidence="5">
    <location>
        <begin position="146"/>
        <end position="166"/>
    </location>
</feature>
<feature type="topological domain" description="Cytoplasmic" evidence="6">
    <location>
        <begin position="167"/>
        <end position="175"/>
    </location>
</feature>
<feature type="transmembrane region" description="Helical" evidence="5">
    <location>
        <begin position="176"/>
        <end position="196"/>
    </location>
</feature>
<feature type="transmembrane region" description="Helical" evidence="5">
    <location>
        <begin position="197"/>
        <end position="217"/>
    </location>
</feature>
<feature type="topological domain" description="Cytoplasmic" evidence="6">
    <location>
        <begin position="218"/>
        <end position="226"/>
    </location>
</feature>
<feature type="transmembrane region" description="Helical" evidence="5">
    <location>
        <begin position="227"/>
        <end position="247"/>
    </location>
</feature>
<feature type="topological domain" description="Extracellular" evidence="6">
    <location>
        <begin position="248"/>
        <end position="281"/>
    </location>
</feature>
<feature type="transmembrane region" description="Helical" evidence="5">
    <location>
        <begin position="282"/>
        <end position="302"/>
    </location>
</feature>
<feature type="topological domain" description="Cytoplasmic" evidence="6">
    <location>
        <begin position="303"/>
        <end position="310"/>
    </location>
</feature>
<feature type="transmembrane region" description="Helical" evidence="5">
    <location>
        <begin position="311"/>
        <end position="331"/>
    </location>
</feature>
<feature type="topological domain" description="Extracellular" evidence="6">
    <location>
        <begin position="332"/>
        <end position="352"/>
    </location>
</feature>
<feature type="transmembrane region" description="Helical" evidence="5">
    <location>
        <begin position="353"/>
        <end position="373"/>
    </location>
</feature>
<feature type="topological domain" description="Cytoplasmic" evidence="6">
    <location>
        <begin position="374"/>
        <end position="379"/>
    </location>
</feature>
<feature type="transmembrane region" description="Helical" evidence="5">
    <location>
        <begin position="380"/>
        <end position="400"/>
    </location>
</feature>
<feature type="topological domain" description="Extracellular" evidence="6">
    <location>
        <position position="401"/>
    </location>
</feature>
<feature type="transmembrane region" description="Helical" evidence="5">
    <location>
        <begin position="402"/>
        <end position="422"/>
    </location>
</feature>
<feature type="topological domain" description="Cytoplasmic" evidence="6">
    <location>
        <begin position="423"/>
        <end position="433"/>
    </location>
</feature>
<feature type="transmembrane region" description="Helical" evidence="5">
    <location>
        <begin position="434"/>
        <end position="454"/>
    </location>
</feature>
<feature type="topological domain" description="Extracellular" evidence="6">
    <location>
        <begin position="455"/>
        <end position="758"/>
    </location>
</feature>
<feature type="region of interest" description="Interacts with target acceptor peptide in protein substrate" evidence="2">
    <location>
        <begin position="488"/>
        <end position="490"/>
    </location>
</feature>
<feature type="short sequence motif" description="DXD motif 1" evidence="2">
    <location>
        <begin position="29"/>
        <end position="31"/>
    </location>
</feature>
<feature type="short sequence motif" description="DXD motif 2" evidence="2">
    <location>
        <begin position="144"/>
        <end position="146"/>
    </location>
</feature>
<feature type="short sequence motif" description="TIXE motif" evidence="2">
    <location>
        <begin position="340"/>
        <end position="343"/>
    </location>
</feature>
<feature type="short sequence motif" description="WWDYG motif" evidence="4">
    <location>
        <begin position="488"/>
        <end position="492"/>
    </location>
</feature>
<feature type="short sequence motif" description="DK motif" evidence="4">
    <location>
        <begin position="540"/>
        <end position="547"/>
    </location>
</feature>
<feature type="binding site" evidence="2">
    <location>
        <position position="31"/>
    </location>
    <ligand>
        <name>Mn(2+)</name>
        <dbReference type="ChEBI" id="CHEBI:29035"/>
    </ligand>
</feature>
<feature type="binding site" evidence="2">
    <location>
        <position position="144"/>
    </location>
    <ligand>
        <name>Mn(2+)</name>
        <dbReference type="ChEBI" id="CHEBI:29035"/>
    </ligand>
</feature>
<feature type="binding site" evidence="2">
    <location>
        <position position="146"/>
    </location>
    <ligand>
        <name>Mn(2+)</name>
        <dbReference type="ChEBI" id="CHEBI:29035"/>
    </ligand>
</feature>
<feature type="binding site" evidence="2">
    <location>
        <position position="401"/>
    </location>
    <ligand>
        <name>a glycophospholipid</name>
        <dbReference type="ChEBI" id="CHEBI:24397"/>
        <note>archaeal dolichyl phosphooligosaccharide</note>
    </ligand>
</feature>
<feature type="site" description="Interacts with target acceptor peptide in protein substrate" evidence="2">
    <location>
        <position position="31"/>
    </location>
</feature>
<feature type="site" description="Important for catalytic activity" evidence="1">
    <location>
        <position position="137"/>
    </location>
</feature>
<feature type="site" description="Interacts with target acceptor peptide in protein substrate" evidence="2">
    <location>
        <position position="343"/>
    </location>
</feature>
<feature type="site" description="Interacts with target acceptor peptide in protein substrate" evidence="2">
    <location>
        <position position="543"/>
    </location>
</feature>
<organism>
    <name type="scientific">Pyrococcus horikoshii (strain ATCC 700860 / DSM 12428 / JCM 9974 / NBRC 100139 / OT-3)</name>
    <dbReference type="NCBI Taxonomy" id="70601"/>
    <lineage>
        <taxon>Archaea</taxon>
        <taxon>Methanobacteriati</taxon>
        <taxon>Methanobacteriota</taxon>
        <taxon>Thermococci</taxon>
        <taxon>Thermococcales</taxon>
        <taxon>Thermococcaceae</taxon>
        <taxon>Pyrococcus</taxon>
    </lineage>
</organism>
<keyword id="KW-1003">Cell membrane</keyword>
<keyword id="KW-0328">Glycosyltransferase</keyword>
<keyword id="KW-0460">Magnesium</keyword>
<keyword id="KW-0464">Manganese</keyword>
<keyword id="KW-0472">Membrane</keyword>
<keyword id="KW-0479">Metal-binding</keyword>
<keyword id="KW-0808">Transferase</keyword>
<keyword id="KW-0812">Transmembrane</keyword>
<keyword id="KW-1133">Transmembrane helix</keyword>
<evidence type="ECO:0000250" key="1">
    <source>
        <dbReference type="UniProtKB" id="B9KDD4"/>
    </source>
</evidence>
<evidence type="ECO:0000250" key="2">
    <source>
        <dbReference type="UniProtKB" id="O29867"/>
    </source>
</evidence>
<evidence type="ECO:0000250" key="3">
    <source>
        <dbReference type="UniProtKB" id="Q2EMT4"/>
    </source>
</evidence>
<evidence type="ECO:0000250" key="4">
    <source>
        <dbReference type="UniProtKB" id="Q8U4D2"/>
    </source>
</evidence>
<evidence type="ECO:0000255" key="5"/>
<evidence type="ECO:0000305" key="6"/>
<reference key="1">
    <citation type="journal article" date="1998" name="DNA Res.">
        <title>Complete sequence and gene organization of the genome of a hyper-thermophilic archaebacterium, Pyrococcus horikoshii OT3.</title>
        <authorList>
            <person name="Kawarabayasi Y."/>
            <person name="Sawada M."/>
            <person name="Horikawa H."/>
            <person name="Haikawa Y."/>
            <person name="Hino Y."/>
            <person name="Yamamoto S."/>
            <person name="Sekine M."/>
            <person name="Baba S."/>
            <person name="Kosugi H."/>
            <person name="Hosoyama A."/>
            <person name="Nagai Y."/>
            <person name="Sakai M."/>
            <person name="Ogura K."/>
            <person name="Otsuka R."/>
            <person name="Nakazawa H."/>
            <person name="Takamiya M."/>
            <person name="Ohfuku Y."/>
            <person name="Funahashi T."/>
            <person name="Tanaka T."/>
            <person name="Kudoh Y."/>
            <person name="Yamazaki J."/>
            <person name="Kushida N."/>
            <person name="Oguchi A."/>
            <person name="Aoki K."/>
            <person name="Yoshizawa T."/>
            <person name="Nakamura Y."/>
            <person name="Robb F.T."/>
            <person name="Horikoshi K."/>
            <person name="Masuchi Y."/>
            <person name="Shizuya H."/>
            <person name="Kikuchi H."/>
        </authorList>
    </citation>
    <scope>NUCLEOTIDE SEQUENCE [LARGE SCALE GENOMIC DNA]</scope>
    <source>
        <strain>ATCC 700860 / DSM 12428 / JCM 9974 / NBRC 100139 / OT-3</strain>
    </source>
</reference>
<accession>O58981</accession>
<comment type="function">
    <text evidence="4">Oligosaccharyl transferase (OST) that catalyzes the initial transfer of a defined glycan (ManNAcXyl(2)GlcAMan(2)GalNAc in Pyrococcus) from the lipid carrier dolichol-monophosphate to an asparagine residue within an Asn-X-Ser/Thr consensus motif in nascent polypeptide chains, the first step in protein N-glycosylation.</text>
</comment>
<comment type="catalytic activity">
    <reaction evidence="4">
        <text>an archaeal dolichyl phosphooligosaccharide + [protein]-L-asparagine = an archaeal dolichyl phosphate + a glycoprotein with the oligosaccharide chain attached by N-beta-D-glycosyl linkage to a protein L-asparagine.</text>
        <dbReference type="EC" id="2.4.99.21"/>
    </reaction>
</comment>
<comment type="cofactor">
    <cofactor evidence="4">
        <name>Mn(2+)</name>
        <dbReference type="ChEBI" id="CHEBI:29035"/>
    </cofactor>
    <cofactor evidence="4">
        <name>Mg(2+)</name>
        <dbReference type="ChEBI" id="CHEBI:18420"/>
    </cofactor>
</comment>
<comment type="pathway">
    <text evidence="4">Protein modification; protein glycosylation.</text>
</comment>
<comment type="subcellular location">
    <subcellularLocation>
        <location evidence="3">Cell membrane</location>
        <topology evidence="3">Multi-pass membrane protein</topology>
    </subcellularLocation>
</comment>
<comment type="domain">
    <text evidence="2">Despite low primary sequence conservation between eukaryotic catalytic subunits and bacterial and archaeal single subunit OSTs (ssOST), structural comparison revealed several common motifs at spatially equivalent positions, like the DXD motif 1 on the external loop 1 and the DXD motif 2 on the external loop 2 involved in binding of the metal ion cofactor and the carboxamide group of the acceptor asparagine, the conserved Glu residue of the TIXE/SVSE motif on the external loop 5 involved in catalysis, as well as the WWDYG and the DK/MI motifs in the globular domain that define the binding pocket for the +2 Ser/Thr of the acceptor sequon. In bacterial ssOSTs, an Arg residue was found to interact with a negatively charged side chain at the -2 position of the sequon. This Arg is conserved in bacterial enzymes and correlates with an extended sequon requirement (Asp-X-Asn-X-Ser/Thr) for bacterial N-glycosylation.</text>
</comment>
<comment type="similarity">
    <text evidence="6">Belongs to the STT3 family.</text>
</comment>
<name>AGLB2_PYRHO</name>
<protein>
    <recommendedName>
        <fullName>Dolichyl-phosphooligosaccharide-protein glycotransferase 2</fullName>
        <ecNumber>2.4.99.21</ecNumber>
    </recommendedName>
    <alternativeName>
        <fullName>Archaeal glycosylation protein B</fullName>
        <shortName>AglB-S</shortName>
        <shortName>AglB-Short</shortName>
    </alternativeName>
    <alternativeName>
        <fullName>Oligosaccharyl transferase</fullName>
        <shortName>OST</shortName>
        <shortName>OTase</shortName>
    </alternativeName>
</protein>
<proteinExistence type="inferred from homology"/>
<sequence length="758" mass="86787">MKRRYSILIILLVAIFYRMITFRFKYLLGYDPYFHLAYIEEVNKVGKWINFLTFAGGPWGYQVKLFHPLGLWMTPLYLYKLLKVFGVSLTTTFKITPVIFGVLTVIFLYLSLLKLYDEKRAFFGGFFLAISYGHVFRSMANYYRGDNYMLFWYSVALLGISLALGIKKGKWKYKRLIFYTLPVLASGFSAIFWQAYYPIFAFLLSNALLLAVGAFILKKDKYLLDSIILILSTAFGVLLANYLGGIFGYGMLGYAKWLGKSVAKKLGLEFGYLKDVYLILHLKYLVPISLSFVLVLILLGFLTKDIRIRSLFLGIASFIGIIILFKRFEALKELSTGFGIFKEAPILETQPTSFKDLWAAFSLSFFLTPLFFIRFKKPRVEDFLTLGLIIPSVYMLKTWTRFLFIGSMAIAIMSGIGIVELYEAIKPRLNGKKALATGIITLVILPGVIAGLSFKEVCSLHPEMNEAWERALKWLKNNSNENDVILAWWDWGHFITYYARRSPIAQGGPSVGVALYLLGKLNENWAINLGVDYVIVSYYDFLKFGAILSTANLSKRYNIRGYGLVVLPLRASTGALIFENRGYRAIVRHDKSWNAVIIYNGQMIYPRKLYVEHKEGVQEIKPPESNSNTYLYVNLNYGYAIFMNGNAFNTTLVRLFITPEKPYKLVYSDGGLIKIFKLEHPNVKVERRESNVILNFENGTSLGLYFFLDNGTMVLSKWYNVKGKNEFIVPKVNASVARYVLKRGKKVVDRGVFRLSYN</sequence>
<dbReference type="EC" id="2.4.99.21"/>
<dbReference type="EMBL" id="BA000001">
    <property type="protein sequence ID" value="BAA30374.1"/>
    <property type="molecule type" value="Genomic_DNA"/>
</dbReference>
<dbReference type="PIR" id="D71072">
    <property type="entry name" value="D71072"/>
</dbReference>
<dbReference type="RefSeq" id="WP_010885360.1">
    <property type="nucleotide sequence ID" value="NC_000961.1"/>
</dbReference>
<dbReference type="SMR" id="O58981"/>
<dbReference type="STRING" id="70601.gene:9378238"/>
<dbReference type="CAZy" id="GT66">
    <property type="family name" value="Glycosyltransferase Family 66"/>
</dbReference>
<dbReference type="TCDB" id="9.B.142.3.2">
    <property type="family name" value="the integral membrane glycosyltransferase family 39 (gt39) family"/>
</dbReference>
<dbReference type="DNASU" id="1443596"/>
<dbReference type="EnsemblBacteria" id="BAA30374">
    <property type="protein sequence ID" value="BAA30374"/>
    <property type="gene ID" value="BAA30374"/>
</dbReference>
<dbReference type="GeneID" id="1443596"/>
<dbReference type="KEGG" id="pho:PH1271"/>
<dbReference type="eggNOG" id="arCOG02044">
    <property type="taxonomic scope" value="Archaea"/>
</dbReference>
<dbReference type="OrthoDB" id="82393at2157"/>
<dbReference type="BRENDA" id="2.4.99.18">
    <property type="organism ID" value="5244"/>
</dbReference>
<dbReference type="UniPathway" id="UPA00378"/>
<dbReference type="Proteomes" id="UP000000752">
    <property type="component" value="Chromosome"/>
</dbReference>
<dbReference type="GO" id="GO:0005886">
    <property type="term" value="C:plasma membrane"/>
    <property type="evidence" value="ECO:0007669"/>
    <property type="project" value="UniProtKB-SubCell"/>
</dbReference>
<dbReference type="GO" id="GO:0046872">
    <property type="term" value="F:metal ion binding"/>
    <property type="evidence" value="ECO:0007669"/>
    <property type="project" value="UniProtKB-KW"/>
</dbReference>
<dbReference type="GO" id="GO:0004576">
    <property type="term" value="F:oligosaccharyl transferase activity"/>
    <property type="evidence" value="ECO:0007669"/>
    <property type="project" value="InterPro"/>
</dbReference>
<dbReference type="GO" id="GO:0006486">
    <property type="term" value="P:protein glycosylation"/>
    <property type="evidence" value="ECO:0007669"/>
    <property type="project" value="UniProtKB-UniPathway"/>
</dbReference>
<dbReference type="Gene3D" id="3.40.50.12610">
    <property type="match status" value="1"/>
</dbReference>
<dbReference type="InterPro" id="IPR003674">
    <property type="entry name" value="Oligo_trans_STT3"/>
</dbReference>
<dbReference type="InterPro" id="IPR048999">
    <property type="entry name" value="STT3-PglB_core"/>
</dbReference>
<dbReference type="PANTHER" id="PTHR13872">
    <property type="entry name" value="DOLICHYL-DIPHOSPHOOLIGOSACCHARIDE--PROTEIN GLYCOSYLTRANSFERASE SUBUNIT"/>
    <property type="match status" value="1"/>
</dbReference>
<dbReference type="PANTHER" id="PTHR13872:SF1">
    <property type="entry name" value="DOLICHYL-DIPHOSPHOOLIGOSACCHARIDE--PROTEIN GLYCOSYLTRANSFERASE SUBUNIT STT3B"/>
    <property type="match status" value="1"/>
</dbReference>
<dbReference type="Pfam" id="PF21436">
    <property type="entry name" value="STT3-PglB_core"/>
    <property type="match status" value="1"/>
</dbReference>